<accession>Q5U3U6</accession>
<organism>
    <name type="scientific">Danio rerio</name>
    <name type="common">Zebrafish</name>
    <name type="synonym">Brachydanio rerio</name>
    <dbReference type="NCBI Taxonomy" id="7955"/>
    <lineage>
        <taxon>Eukaryota</taxon>
        <taxon>Metazoa</taxon>
        <taxon>Chordata</taxon>
        <taxon>Craniata</taxon>
        <taxon>Vertebrata</taxon>
        <taxon>Euteleostomi</taxon>
        <taxon>Actinopterygii</taxon>
        <taxon>Neopterygii</taxon>
        <taxon>Teleostei</taxon>
        <taxon>Ostariophysi</taxon>
        <taxon>Cypriniformes</taxon>
        <taxon>Danionidae</taxon>
        <taxon>Danioninae</taxon>
        <taxon>Danio</taxon>
    </lineage>
</organism>
<protein>
    <recommendedName>
        <fullName>Protein aurora borealis</fullName>
    </recommendedName>
</protein>
<gene>
    <name type="primary">bora</name>
    <name type="ORF">zgc:101616</name>
</gene>
<proteinExistence type="evidence at transcript level"/>
<keyword id="KW-0131">Cell cycle</keyword>
<keyword id="KW-0132">Cell division</keyword>
<keyword id="KW-0498">Mitosis</keyword>
<keyword id="KW-1185">Reference proteome</keyword>
<name>BORA_DANRE</name>
<comment type="function">
    <text evidence="1">Required for the activation of aurka at the onset of mitosis.</text>
</comment>
<comment type="similarity">
    <text evidence="3">Belongs to the BORA family.</text>
</comment>
<evidence type="ECO:0000250" key="1"/>
<evidence type="ECO:0000256" key="2">
    <source>
        <dbReference type="SAM" id="MobiDB-lite"/>
    </source>
</evidence>
<evidence type="ECO:0000305" key="3"/>
<dbReference type="EMBL" id="BC085389">
    <property type="protein sequence ID" value="AAH85389.1"/>
    <property type="molecule type" value="mRNA"/>
</dbReference>
<dbReference type="RefSeq" id="NP_001007451.1">
    <property type="nucleotide sequence ID" value="NM_001007450.1"/>
</dbReference>
<dbReference type="FunCoup" id="Q5U3U6">
    <property type="interactions" value="1906"/>
</dbReference>
<dbReference type="STRING" id="7955.ENSDARP00000062627"/>
<dbReference type="PaxDb" id="7955-ENSDARP00000062627"/>
<dbReference type="GeneID" id="555606"/>
<dbReference type="KEGG" id="dre:555606"/>
<dbReference type="AGR" id="ZFIN:ZDB-GENE-041114-165"/>
<dbReference type="CTD" id="79866"/>
<dbReference type="ZFIN" id="ZDB-GENE-041114-165">
    <property type="gene designation" value="bora"/>
</dbReference>
<dbReference type="eggNOG" id="ENOG502S85H">
    <property type="taxonomic scope" value="Eukaryota"/>
</dbReference>
<dbReference type="InParanoid" id="Q5U3U6"/>
<dbReference type="OrthoDB" id="10020858at2759"/>
<dbReference type="PhylomeDB" id="Q5U3U6"/>
<dbReference type="Reactome" id="R-DRE-2565942">
    <property type="pathway name" value="Regulation of PLK1 Activity at G2/M Transition"/>
</dbReference>
<dbReference type="PRO" id="PR:Q5U3U6"/>
<dbReference type="Proteomes" id="UP000000437">
    <property type="component" value="Alternate scaffold 1"/>
</dbReference>
<dbReference type="Proteomes" id="UP000000437">
    <property type="component" value="Chromosome 1"/>
</dbReference>
<dbReference type="GO" id="GO:0005737">
    <property type="term" value="C:cytoplasm"/>
    <property type="evidence" value="ECO:0000318"/>
    <property type="project" value="GO_Central"/>
</dbReference>
<dbReference type="GO" id="GO:0005634">
    <property type="term" value="C:nucleus"/>
    <property type="evidence" value="ECO:0000318"/>
    <property type="project" value="GO_Central"/>
</dbReference>
<dbReference type="GO" id="GO:0019901">
    <property type="term" value="F:protein kinase binding"/>
    <property type="evidence" value="ECO:0000318"/>
    <property type="project" value="GO_Central"/>
</dbReference>
<dbReference type="GO" id="GO:0051301">
    <property type="term" value="P:cell division"/>
    <property type="evidence" value="ECO:0007669"/>
    <property type="project" value="UniProtKB-KW"/>
</dbReference>
<dbReference type="GO" id="GO:0007088">
    <property type="term" value="P:regulation of mitotic nuclear division"/>
    <property type="evidence" value="ECO:0000250"/>
    <property type="project" value="UniProtKB"/>
</dbReference>
<dbReference type="GO" id="GO:0060236">
    <property type="term" value="P:regulation of mitotic spindle organization"/>
    <property type="evidence" value="ECO:0000250"/>
    <property type="project" value="UniProtKB"/>
</dbReference>
<dbReference type="GO" id="GO:0032880">
    <property type="term" value="P:regulation of protein localization"/>
    <property type="evidence" value="ECO:0000250"/>
    <property type="project" value="UniProtKB"/>
</dbReference>
<dbReference type="InterPro" id="IPR023252">
    <property type="entry name" value="Aurora_borealis_protein"/>
</dbReference>
<dbReference type="PANTHER" id="PTHR14728">
    <property type="entry name" value="PROTEIN AURORA BOREALIS"/>
    <property type="match status" value="1"/>
</dbReference>
<dbReference type="PANTHER" id="PTHR14728:SF2">
    <property type="entry name" value="PROTEIN AURORA BOREALIS"/>
    <property type="match status" value="1"/>
</dbReference>
<dbReference type="Pfam" id="PF15280">
    <property type="entry name" value="BORA_N"/>
    <property type="match status" value="1"/>
</dbReference>
<dbReference type="PRINTS" id="PR02038">
    <property type="entry name" value="AURORABORA"/>
</dbReference>
<feature type="chain" id="PRO_0000273208" description="Protein aurora borealis">
    <location>
        <begin position="1"/>
        <end position="551"/>
    </location>
</feature>
<feature type="region of interest" description="Disordered" evidence="2">
    <location>
        <begin position="194"/>
        <end position="221"/>
    </location>
</feature>
<feature type="region of interest" description="Disordered" evidence="2">
    <location>
        <begin position="379"/>
        <end position="474"/>
    </location>
</feature>
<feature type="region of interest" description="Disordered" evidence="2">
    <location>
        <begin position="517"/>
        <end position="551"/>
    </location>
</feature>
<feature type="compositionally biased region" description="Low complexity" evidence="2">
    <location>
        <begin position="201"/>
        <end position="215"/>
    </location>
</feature>
<feature type="compositionally biased region" description="Polar residues" evidence="2">
    <location>
        <begin position="382"/>
        <end position="393"/>
    </location>
</feature>
<feature type="compositionally biased region" description="Basic and acidic residues" evidence="2">
    <location>
        <begin position="416"/>
        <end position="433"/>
    </location>
</feature>
<feature type="compositionally biased region" description="Acidic residues" evidence="2">
    <location>
        <begin position="434"/>
        <end position="458"/>
    </location>
</feature>
<feature type="compositionally biased region" description="Polar residues" evidence="2">
    <location>
        <begin position="463"/>
        <end position="474"/>
    </location>
</feature>
<feature type="compositionally biased region" description="Basic and acidic residues" evidence="2">
    <location>
        <begin position="522"/>
        <end position="533"/>
    </location>
</feature>
<reference key="1">
    <citation type="submission" date="2004-11" db="EMBL/GenBank/DDBJ databases">
        <authorList>
            <consortium name="NIH - Zebrafish Gene Collection (ZGC) project"/>
        </authorList>
    </citation>
    <scope>NUCLEOTIDE SEQUENCE [LARGE SCALE MRNA]</scope>
    <source>
        <tissue>Embryo</tissue>
    </source>
</reference>
<sequence>MGDIAKIHITPETPARPTILNPFESPNDYHRLHESVVPSPSVFKSCKSSSATPAKFKWSIDEMANLLPVEIDPEDIHRQAVFFSQARADSEIEEKRQHAIEQFFTKGAIVPSPWGPLTSKQSMKLPHHKSPLSPLVTEEIQPPKKINAICQTVLSLPVDFNLEKVLGDYYKTEELTEQVQESLSSSSLRRKLFLDGHDSGSESSTPSSPDRNSPSVHPSSRELMSSAIVSPLQCGIPTGTPMSGQFSSSPIQGQCRAYSLGSVTSPMFSERSSPAFKSPILSPIRLQQSVTPESGERKRLSFLSPNCVPKGSSDINMNRSGESPLVEGCSPIRSCSPFQSRPRNRACMWASPAHISPILHPVLHDKENIHITQHLPTMDLDATSTDPHAQQDSLHAESSESEASVAVSEQMEQDELFVKDTGENVETNGKECESDNEDEGENELGEEESCAWVPEEDTASPVRLSSTGTGSVPNAESTHMFLSLLAEGSITPYDTSMQVDSGYNTHSVCTTSLMDTLSSDSQSKEMLDTHTSEESGPFTRHTKPKLFVPPH</sequence>